<reference key="1">
    <citation type="journal article" date="2011" name="J. Bacteriol.">
        <title>Genome sequence of Thermotoga sp. strain RQ2, a hyperthermophilic bacterium isolated from a geothermally heated region of the seafloor near Ribeira Quente, the Azores.</title>
        <authorList>
            <person name="Swithers K.S."/>
            <person name="DiPippo J.L."/>
            <person name="Bruce D.C."/>
            <person name="Detter C."/>
            <person name="Tapia R."/>
            <person name="Han S."/>
            <person name="Saunders E."/>
            <person name="Goodwin L.A."/>
            <person name="Han J."/>
            <person name="Woyke T."/>
            <person name="Pitluck S."/>
            <person name="Pennacchio L."/>
            <person name="Nolan M."/>
            <person name="Mikhailova N."/>
            <person name="Lykidis A."/>
            <person name="Land M.L."/>
            <person name="Brettin T."/>
            <person name="Stetter K.O."/>
            <person name="Nelson K.E."/>
            <person name="Gogarten J.P."/>
            <person name="Noll K.M."/>
        </authorList>
    </citation>
    <scope>NUCLEOTIDE SEQUENCE [LARGE SCALE GENOMIC DNA]</scope>
    <source>
        <strain>RQ2</strain>
    </source>
</reference>
<feature type="chain" id="PRO_1000124077" description="4-hydroxy-tetrahydrodipicolinate synthase">
    <location>
        <begin position="1"/>
        <end position="294"/>
    </location>
</feature>
<feature type="active site" description="Proton donor/acceptor" evidence="1">
    <location>
        <position position="132"/>
    </location>
</feature>
<feature type="active site" description="Schiff-base intermediate with substrate" evidence="1">
    <location>
        <position position="161"/>
    </location>
</feature>
<feature type="binding site" evidence="1">
    <location>
        <position position="44"/>
    </location>
    <ligand>
        <name>pyruvate</name>
        <dbReference type="ChEBI" id="CHEBI:15361"/>
    </ligand>
</feature>
<feature type="binding site" evidence="1">
    <location>
        <position position="206"/>
    </location>
    <ligand>
        <name>pyruvate</name>
        <dbReference type="ChEBI" id="CHEBI:15361"/>
    </ligand>
</feature>
<feature type="site" description="Part of a proton relay during catalysis" evidence="1">
    <location>
        <position position="43"/>
    </location>
</feature>
<feature type="site" description="Part of a proton relay during catalysis" evidence="1">
    <location>
        <position position="106"/>
    </location>
</feature>
<accession>B1LBR1</accession>
<comment type="function">
    <text evidence="1">Catalyzes the condensation of (S)-aspartate-beta-semialdehyde [(S)-ASA] and pyruvate to 4-hydroxy-tetrahydrodipicolinate (HTPA).</text>
</comment>
<comment type="catalytic activity">
    <reaction evidence="1">
        <text>L-aspartate 4-semialdehyde + pyruvate = (2S,4S)-4-hydroxy-2,3,4,5-tetrahydrodipicolinate + H2O + H(+)</text>
        <dbReference type="Rhea" id="RHEA:34171"/>
        <dbReference type="ChEBI" id="CHEBI:15361"/>
        <dbReference type="ChEBI" id="CHEBI:15377"/>
        <dbReference type="ChEBI" id="CHEBI:15378"/>
        <dbReference type="ChEBI" id="CHEBI:67139"/>
        <dbReference type="ChEBI" id="CHEBI:537519"/>
        <dbReference type="EC" id="4.3.3.7"/>
    </reaction>
</comment>
<comment type="pathway">
    <text evidence="1">Amino-acid biosynthesis; L-lysine biosynthesis via DAP pathway; (S)-tetrahydrodipicolinate from L-aspartate: step 3/4.</text>
</comment>
<comment type="subunit">
    <text evidence="1">Homotetramer; dimer of dimers.</text>
</comment>
<comment type="subcellular location">
    <subcellularLocation>
        <location evidence="1">Cytoplasm</location>
    </subcellularLocation>
</comment>
<comment type="similarity">
    <text evidence="1">Belongs to the DapA family.</text>
</comment>
<comment type="caution">
    <text evidence="2">Was originally thought to be a dihydrodipicolinate synthase (DHDPS), catalyzing the condensation of (S)-aspartate-beta-semialdehyde [(S)-ASA] and pyruvate to dihydrodipicolinate (DHDP). However, it was shown in E.coli that the product of the enzymatic reaction is not dihydrodipicolinate but in fact (4S)-4-hydroxy-2,3,4,5-tetrahydro-(2S)-dipicolinic acid (HTPA), and that the consecutive dehydration reaction leading to DHDP is not spontaneous but catalyzed by DapB.</text>
</comment>
<protein>
    <recommendedName>
        <fullName evidence="1">4-hydroxy-tetrahydrodipicolinate synthase</fullName>
        <shortName evidence="1">HTPA synthase</shortName>
        <ecNumber evidence="1">4.3.3.7</ecNumber>
    </recommendedName>
</protein>
<evidence type="ECO:0000255" key="1">
    <source>
        <dbReference type="HAMAP-Rule" id="MF_00418"/>
    </source>
</evidence>
<evidence type="ECO:0000305" key="2"/>
<name>DAPA_THESQ</name>
<sequence length="294" mass="32420">MFRGVGTAIVTPFKNGELDLESYERLVRYQLENGVNALIVLGTTGESPTVNEDEREKLVSRTLEIVDGKIPVIVGAGTNSTEKTLKLVKQAEKLGANGVLVVTPYYNKPTQEGLYQHYKYISERTDLGIVVYNVPGRTGVNVLPETAARIAADLKNVVGIKEANPDIDQIDRMVSLTKQARSDFMVWSGNDDRTFYLLCAGGDGVISVVSNVAPKQMVELCAEYFSGNLEKSREVHRKLRPLMKALFVETNPIPVKAALNLMGFIENELRLPLVPASEKTVELLRNVLKESGLL</sequence>
<keyword id="KW-0028">Amino-acid biosynthesis</keyword>
<keyword id="KW-0963">Cytoplasm</keyword>
<keyword id="KW-0220">Diaminopimelate biosynthesis</keyword>
<keyword id="KW-0456">Lyase</keyword>
<keyword id="KW-0457">Lysine biosynthesis</keyword>
<keyword id="KW-0704">Schiff base</keyword>
<dbReference type="EC" id="4.3.3.7" evidence="1"/>
<dbReference type="EMBL" id="CP000969">
    <property type="protein sequence ID" value="ACB09759.1"/>
    <property type="molecule type" value="Genomic_DNA"/>
</dbReference>
<dbReference type="RefSeq" id="WP_012311109.1">
    <property type="nucleotide sequence ID" value="NC_010483.1"/>
</dbReference>
<dbReference type="SMR" id="B1LBR1"/>
<dbReference type="KEGG" id="trq:TRQ2_1415"/>
<dbReference type="HOGENOM" id="CLU_049343_7_1_0"/>
<dbReference type="UniPathway" id="UPA00034">
    <property type="reaction ID" value="UER00017"/>
</dbReference>
<dbReference type="Proteomes" id="UP000001687">
    <property type="component" value="Chromosome"/>
</dbReference>
<dbReference type="GO" id="GO:0005829">
    <property type="term" value="C:cytosol"/>
    <property type="evidence" value="ECO:0007669"/>
    <property type="project" value="TreeGrafter"/>
</dbReference>
<dbReference type="GO" id="GO:0008840">
    <property type="term" value="F:4-hydroxy-tetrahydrodipicolinate synthase activity"/>
    <property type="evidence" value="ECO:0007669"/>
    <property type="project" value="UniProtKB-UniRule"/>
</dbReference>
<dbReference type="GO" id="GO:0019877">
    <property type="term" value="P:diaminopimelate biosynthetic process"/>
    <property type="evidence" value="ECO:0007669"/>
    <property type="project" value="UniProtKB-UniRule"/>
</dbReference>
<dbReference type="GO" id="GO:0009089">
    <property type="term" value="P:lysine biosynthetic process via diaminopimelate"/>
    <property type="evidence" value="ECO:0007669"/>
    <property type="project" value="UniProtKB-UniRule"/>
</dbReference>
<dbReference type="CDD" id="cd00950">
    <property type="entry name" value="DHDPS"/>
    <property type="match status" value="1"/>
</dbReference>
<dbReference type="Gene3D" id="3.20.20.70">
    <property type="entry name" value="Aldolase class I"/>
    <property type="match status" value="1"/>
</dbReference>
<dbReference type="HAMAP" id="MF_00418">
    <property type="entry name" value="DapA"/>
    <property type="match status" value="1"/>
</dbReference>
<dbReference type="InterPro" id="IPR013785">
    <property type="entry name" value="Aldolase_TIM"/>
</dbReference>
<dbReference type="InterPro" id="IPR005263">
    <property type="entry name" value="DapA"/>
</dbReference>
<dbReference type="InterPro" id="IPR002220">
    <property type="entry name" value="DapA-like"/>
</dbReference>
<dbReference type="InterPro" id="IPR020625">
    <property type="entry name" value="Schiff_base-form_aldolases_AS"/>
</dbReference>
<dbReference type="InterPro" id="IPR020624">
    <property type="entry name" value="Schiff_base-form_aldolases_CS"/>
</dbReference>
<dbReference type="NCBIfam" id="TIGR00674">
    <property type="entry name" value="dapA"/>
    <property type="match status" value="1"/>
</dbReference>
<dbReference type="PANTHER" id="PTHR12128:SF66">
    <property type="entry name" value="4-HYDROXY-2-OXOGLUTARATE ALDOLASE, MITOCHONDRIAL"/>
    <property type="match status" value="1"/>
</dbReference>
<dbReference type="PANTHER" id="PTHR12128">
    <property type="entry name" value="DIHYDRODIPICOLINATE SYNTHASE"/>
    <property type="match status" value="1"/>
</dbReference>
<dbReference type="Pfam" id="PF00701">
    <property type="entry name" value="DHDPS"/>
    <property type="match status" value="1"/>
</dbReference>
<dbReference type="PIRSF" id="PIRSF001365">
    <property type="entry name" value="DHDPS"/>
    <property type="match status" value="1"/>
</dbReference>
<dbReference type="PRINTS" id="PR00146">
    <property type="entry name" value="DHPICSNTHASE"/>
</dbReference>
<dbReference type="SMART" id="SM01130">
    <property type="entry name" value="DHDPS"/>
    <property type="match status" value="1"/>
</dbReference>
<dbReference type="SUPFAM" id="SSF51569">
    <property type="entry name" value="Aldolase"/>
    <property type="match status" value="1"/>
</dbReference>
<dbReference type="PROSITE" id="PS00665">
    <property type="entry name" value="DHDPS_1"/>
    <property type="match status" value="1"/>
</dbReference>
<dbReference type="PROSITE" id="PS00666">
    <property type="entry name" value="DHDPS_2"/>
    <property type="match status" value="1"/>
</dbReference>
<gene>
    <name evidence="1" type="primary">dapA</name>
    <name type="ordered locus">TRQ2_1415</name>
</gene>
<organism>
    <name type="scientific">Thermotoga sp. (strain RQ2)</name>
    <dbReference type="NCBI Taxonomy" id="126740"/>
    <lineage>
        <taxon>Bacteria</taxon>
        <taxon>Thermotogati</taxon>
        <taxon>Thermotogota</taxon>
        <taxon>Thermotogae</taxon>
        <taxon>Thermotogales</taxon>
        <taxon>Thermotogaceae</taxon>
        <taxon>Thermotoga</taxon>
    </lineage>
</organism>
<proteinExistence type="inferred from homology"/>